<protein>
    <recommendedName>
        <fullName>Cytochrome b</fullName>
    </recommendedName>
    <alternativeName>
        <fullName>Complex III subunit 3</fullName>
    </alternativeName>
    <alternativeName>
        <fullName>Complex III subunit III</fullName>
    </alternativeName>
    <alternativeName>
        <fullName>Cytochrome b-c1 complex subunit 3</fullName>
    </alternativeName>
    <alternativeName>
        <fullName>Ubiquinol-cytochrome-c reductase complex cytochrome b subunit</fullName>
    </alternativeName>
</protein>
<organism>
    <name type="scientific">Marmota marmota</name>
    <name type="common">Alpine marmot</name>
    <dbReference type="NCBI Taxonomy" id="9993"/>
    <lineage>
        <taxon>Eukaryota</taxon>
        <taxon>Metazoa</taxon>
        <taxon>Chordata</taxon>
        <taxon>Craniata</taxon>
        <taxon>Vertebrata</taxon>
        <taxon>Euteleostomi</taxon>
        <taxon>Mammalia</taxon>
        <taxon>Eutheria</taxon>
        <taxon>Euarchontoglires</taxon>
        <taxon>Glires</taxon>
        <taxon>Rodentia</taxon>
        <taxon>Sciuromorpha</taxon>
        <taxon>Sciuridae</taxon>
        <taxon>Xerinae</taxon>
        <taxon>Marmotini</taxon>
        <taxon>Marmota</taxon>
    </lineage>
</organism>
<geneLocation type="mitochondrion"/>
<reference key="1">
    <citation type="journal article" date="1999" name="Syst. Biol.">
        <title>Molecular phylogeny of the marmots (Rodentia: Sciuridae): tests of evolutionary and biogeographic hypotheses.</title>
        <authorList>
            <person name="Steppan S.J."/>
            <person name="Akhverdyan M.R."/>
            <person name="Lyapunova E.A."/>
            <person name="Fraser D.G."/>
            <person name="Vorontsov N.N."/>
            <person name="Hoffmann R.S."/>
            <person name="Braun M.J."/>
        </authorList>
    </citation>
    <scope>NUCLEOTIDE SEQUENCE [GENOMIC DNA]</scope>
    <source>
        <strain>Isolate LMS_Z102</strain>
        <strain>Isolate LMS_Z104</strain>
    </source>
</reference>
<reference key="2">
    <citation type="journal article" date="1999" name="J. Zool. Syst. Evol. Res.">
        <title>Marmot phylogeny revisited: molecular evidence for a diphyletic origin of sociality.</title>
        <authorList>
            <person name="Kruckenhauser L."/>
            <person name="Pinsker W."/>
            <person name="Haring E."/>
            <person name="Arnold W."/>
        </authorList>
    </citation>
    <scope>NUCLEOTIDE SEQUENCE [GENOMIC DNA]</scope>
</reference>
<feature type="chain" id="PRO_0000061158" description="Cytochrome b">
    <location>
        <begin position="1"/>
        <end position="379"/>
    </location>
</feature>
<feature type="transmembrane region" description="Helical" evidence="2">
    <location>
        <begin position="33"/>
        <end position="53"/>
    </location>
</feature>
<feature type="transmembrane region" description="Helical" evidence="2">
    <location>
        <begin position="77"/>
        <end position="98"/>
    </location>
</feature>
<feature type="transmembrane region" description="Helical" evidence="2">
    <location>
        <begin position="113"/>
        <end position="133"/>
    </location>
</feature>
<feature type="transmembrane region" description="Helical" evidence="2">
    <location>
        <begin position="178"/>
        <end position="198"/>
    </location>
</feature>
<feature type="transmembrane region" description="Helical" evidence="2">
    <location>
        <begin position="226"/>
        <end position="246"/>
    </location>
</feature>
<feature type="transmembrane region" description="Helical" evidence="2">
    <location>
        <begin position="288"/>
        <end position="308"/>
    </location>
</feature>
<feature type="transmembrane region" description="Helical" evidence="2">
    <location>
        <begin position="320"/>
        <end position="340"/>
    </location>
</feature>
<feature type="transmembrane region" description="Helical" evidence="2">
    <location>
        <begin position="347"/>
        <end position="367"/>
    </location>
</feature>
<feature type="binding site" description="axial binding residue" evidence="2">
    <location>
        <position position="83"/>
    </location>
    <ligand>
        <name>heme b</name>
        <dbReference type="ChEBI" id="CHEBI:60344"/>
        <label>b562</label>
    </ligand>
    <ligandPart>
        <name>Fe</name>
        <dbReference type="ChEBI" id="CHEBI:18248"/>
    </ligandPart>
</feature>
<feature type="binding site" description="axial binding residue" evidence="2">
    <location>
        <position position="97"/>
    </location>
    <ligand>
        <name>heme b</name>
        <dbReference type="ChEBI" id="CHEBI:60344"/>
        <label>b566</label>
    </ligand>
    <ligandPart>
        <name>Fe</name>
        <dbReference type="ChEBI" id="CHEBI:18248"/>
    </ligandPart>
</feature>
<feature type="binding site" description="axial binding residue" evidence="2">
    <location>
        <position position="182"/>
    </location>
    <ligand>
        <name>heme b</name>
        <dbReference type="ChEBI" id="CHEBI:60344"/>
        <label>b562</label>
    </ligand>
    <ligandPart>
        <name>Fe</name>
        <dbReference type="ChEBI" id="CHEBI:18248"/>
    </ligandPart>
</feature>
<feature type="binding site" description="axial binding residue" evidence="2">
    <location>
        <position position="196"/>
    </location>
    <ligand>
        <name>heme b</name>
        <dbReference type="ChEBI" id="CHEBI:60344"/>
        <label>b566</label>
    </ligand>
    <ligandPart>
        <name>Fe</name>
        <dbReference type="ChEBI" id="CHEBI:18248"/>
    </ligandPart>
</feature>
<feature type="binding site" evidence="2">
    <location>
        <position position="201"/>
    </location>
    <ligand>
        <name>a ubiquinone</name>
        <dbReference type="ChEBI" id="CHEBI:16389"/>
    </ligand>
</feature>
<feature type="sequence variant" description="In strain: Isolate LMS_Z102.">
    <original>V</original>
    <variation>I</variation>
    <location>
        <position position="184"/>
    </location>
</feature>
<feature type="sequence variant" description="In strain: Isolate LMS_Z102.">
    <original>P</original>
    <variation>S</variation>
    <location>
        <position position="261"/>
    </location>
</feature>
<gene>
    <name type="primary">MT-CYB</name>
    <name type="synonym">COB</name>
    <name type="synonym">CYTB</name>
    <name type="synonym">MTCYB</name>
</gene>
<evidence type="ECO:0000250" key="1"/>
<evidence type="ECO:0000250" key="2">
    <source>
        <dbReference type="UniProtKB" id="P00157"/>
    </source>
</evidence>
<evidence type="ECO:0000255" key="3">
    <source>
        <dbReference type="PROSITE-ProRule" id="PRU00967"/>
    </source>
</evidence>
<evidence type="ECO:0000255" key="4">
    <source>
        <dbReference type="PROSITE-ProRule" id="PRU00968"/>
    </source>
</evidence>
<accession>Q9XP34</accession>
<accession>Q9TH50</accession>
<accession>Q9TH51</accession>
<sequence length="379" mass="42836">MTNTRKTHPLMKIINRSLIDLPAPSNISTWWNFGSLLGLCLAIQIFTGLFLAMHYTSDTMTAFSSVTHICRDVNYGWLIRYMHANGASMFFICLFLHVGRGMYYGSYTYFETWNIGVILLLAVMATAFMGYVLPWGQMSFWGATVITNLLSAIPYIGTTLVEWIWGGFSVDKATLTRFFAFHFVLPFIIAALVMVHLLFLHETGSNNPSGLISNSDKIPFHPYFTIKDVLGILLLILILMILVLFSPDLLGDPDNYTPANPLSTPPHIKPEWYFLFAYAILRSIPNKLGGVLALVSSILILMLFPLLHLSKQRSMMFRPLSQCTFWILVTDLITLTWIGGQPVEYPYTIIGQLASILYFAIILLILPAISLIENKLLKW</sequence>
<proteinExistence type="inferred from homology"/>
<comment type="function">
    <text evidence="2">Component of the ubiquinol-cytochrome c reductase complex (complex III or cytochrome b-c1 complex) that is part of the mitochondrial respiratory chain. The b-c1 complex mediates electron transfer from ubiquinol to cytochrome c. Contributes to the generation of a proton gradient across the mitochondrial membrane that is then used for ATP synthesis.</text>
</comment>
<comment type="cofactor">
    <cofactor evidence="2">
        <name>heme b</name>
        <dbReference type="ChEBI" id="CHEBI:60344"/>
    </cofactor>
    <text evidence="2">Binds 2 heme b groups non-covalently.</text>
</comment>
<comment type="subunit">
    <text evidence="2">The cytochrome bc1 complex contains 11 subunits: 3 respiratory subunits (MT-CYB, CYC1 and UQCRFS1), 2 core proteins (UQCRC1 and UQCRC2) and 6 low-molecular weight proteins (UQCRH/QCR6, UQCRB/QCR7, UQCRQ/QCR8, UQCR10/QCR9, UQCR11/QCR10 and a cleavage product of UQCRFS1). This cytochrome bc1 complex then forms a dimer.</text>
</comment>
<comment type="subcellular location">
    <subcellularLocation>
        <location evidence="2">Mitochondrion inner membrane</location>
        <topology evidence="2">Multi-pass membrane protein</topology>
    </subcellularLocation>
</comment>
<comment type="miscellaneous">
    <text evidence="1">Heme 1 (or BL or b562) is low-potential and absorbs at about 562 nm, and heme 2 (or BH or b566) is high-potential and absorbs at about 566 nm.</text>
</comment>
<comment type="similarity">
    <text evidence="3 4">Belongs to the cytochrome b family.</text>
</comment>
<comment type="caution">
    <text evidence="2">The full-length protein contains only eight transmembrane helices, not nine as predicted by bioinformatics tools.</text>
</comment>
<keyword id="KW-0249">Electron transport</keyword>
<keyword id="KW-0349">Heme</keyword>
<keyword id="KW-0408">Iron</keyword>
<keyword id="KW-0472">Membrane</keyword>
<keyword id="KW-0479">Metal-binding</keyword>
<keyword id="KW-0496">Mitochondrion</keyword>
<keyword id="KW-0999">Mitochondrion inner membrane</keyword>
<keyword id="KW-0679">Respiratory chain</keyword>
<keyword id="KW-0812">Transmembrane</keyword>
<keyword id="KW-1133">Transmembrane helix</keyword>
<keyword id="KW-0813">Transport</keyword>
<keyword id="KW-0830">Ubiquinone</keyword>
<name>CYB_MARMR</name>
<dbReference type="EMBL" id="AF143929">
    <property type="protein sequence ID" value="AAD29736.1"/>
    <property type="molecule type" value="Genomic_DNA"/>
</dbReference>
<dbReference type="EMBL" id="AF143930">
    <property type="protein sequence ID" value="AAD29737.1"/>
    <property type="molecule type" value="Genomic_DNA"/>
</dbReference>
<dbReference type="EMBL" id="AF100711">
    <property type="protein sequence ID" value="AAD45202.1"/>
    <property type="molecule type" value="Genomic_DNA"/>
</dbReference>
<dbReference type="SMR" id="Q9XP34"/>
<dbReference type="GO" id="GO:0005743">
    <property type="term" value="C:mitochondrial inner membrane"/>
    <property type="evidence" value="ECO:0007669"/>
    <property type="project" value="UniProtKB-SubCell"/>
</dbReference>
<dbReference type="GO" id="GO:0045275">
    <property type="term" value="C:respiratory chain complex III"/>
    <property type="evidence" value="ECO:0007669"/>
    <property type="project" value="InterPro"/>
</dbReference>
<dbReference type="GO" id="GO:0046872">
    <property type="term" value="F:metal ion binding"/>
    <property type="evidence" value="ECO:0007669"/>
    <property type="project" value="UniProtKB-KW"/>
</dbReference>
<dbReference type="GO" id="GO:0008121">
    <property type="term" value="F:ubiquinol-cytochrome-c reductase activity"/>
    <property type="evidence" value="ECO:0007669"/>
    <property type="project" value="InterPro"/>
</dbReference>
<dbReference type="GO" id="GO:0006122">
    <property type="term" value="P:mitochondrial electron transport, ubiquinol to cytochrome c"/>
    <property type="evidence" value="ECO:0007669"/>
    <property type="project" value="TreeGrafter"/>
</dbReference>
<dbReference type="CDD" id="cd00290">
    <property type="entry name" value="cytochrome_b_C"/>
    <property type="match status" value="1"/>
</dbReference>
<dbReference type="CDD" id="cd00284">
    <property type="entry name" value="Cytochrome_b_N"/>
    <property type="match status" value="1"/>
</dbReference>
<dbReference type="FunFam" id="1.20.810.10:FF:000002">
    <property type="entry name" value="Cytochrome b"/>
    <property type="match status" value="1"/>
</dbReference>
<dbReference type="Gene3D" id="1.20.810.10">
    <property type="entry name" value="Cytochrome Bc1 Complex, Chain C"/>
    <property type="match status" value="1"/>
</dbReference>
<dbReference type="InterPro" id="IPR005798">
    <property type="entry name" value="Cyt_b/b6_C"/>
</dbReference>
<dbReference type="InterPro" id="IPR036150">
    <property type="entry name" value="Cyt_b/b6_C_sf"/>
</dbReference>
<dbReference type="InterPro" id="IPR005797">
    <property type="entry name" value="Cyt_b/b6_N"/>
</dbReference>
<dbReference type="InterPro" id="IPR027387">
    <property type="entry name" value="Cytb/b6-like_sf"/>
</dbReference>
<dbReference type="InterPro" id="IPR030689">
    <property type="entry name" value="Cytochrome_b"/>
</dbReference>
<dbReference type="InterPro" id="IPR048260">
    <property type="entry name" value="Cytochrome_b_C_euk/bac"/>
</dbReference>
<dbReference type="InterPro" id="IPR048259">
    <property type="entry name" value="Cytochrome_b_N_euk/bac"/>
</dbReference>
<dbReference type="InterPro" id="IPR016174">
    <property type="entry name" value="Di-haem_cyt_TM"/>
</dbReference>
<dbReference type="PANTHER" id="PTHR19271">
    <property type="entry name" value="CYTOCHROME B"/>
    <property type="match status" value="1"/>
</dbReference>
<dbReference type="PANTHER" id="PTHR19271:SF16">
    <property type="entry name" value="CYTOCHROME B"/>
    <property type="match status" value="1"/>
</dbReference>
<dbReference type="Pfam" id="PF00032">
    <property type="entry name" value="Cytochrom_B_C"/>
    <property type="match status" value="1"/>
</dbReference>
<dbReference type="Pfam" id="PF00033">
    <property type="entry name" value="Cytochrome_B"/>
    <property type="match status" value="1"/>
</dbReference>
<dbReference type="PIRSF" id="PIRSF038885">
    <property type="entry name" value="COB"/>
    <property type="match status" value="1"/>
</dbReference>
<dbReference type="SUPFAM" id="SSF81648">
    <property type="entry name" value="a domain/subunit of cytochrome bc1 complex (Ubiquinol-cytochrome c reductase)"/>
    <property type="match status" value="1"/>
</dbReference>
<dbReference type="SUPFAM" id="SSF81342">
    <property type="entry name" value="Transmembrane di-heme cytochromes"/>
    <property type="match status" value="1"/>
</dbReference>
<dbReference type="PROSITE" id="PS51003">
    <property type="entry name" value="CYTB_CTER"/>
    <property type="match status" value="1"/>
</dbReference>
<dbReference type="PROSITE" id="PS51002">
    <property type="entry name" value="CYTB_NTER"/>
    <property type="match status" value="1"/>
</dbReference>